<feature type="chain" id="PRO_0000089809" description="Protein FAM204A">
    <location>
        <begin position="1"/>
        <end position="236"/>
    </location>
</feature>
<feature type="region of interest" description="Disordered" evidence="2">
    <location>
        <begin position="1"/>
        <end position="158"/>
    </location>
</feature>
<feature type="coiled-coil region" evidence="1">
    <location>
        <begin position="101"/>
        <end position="167"/>
    </location>
</feature>
<feature type="compositionally biased region" description="Basic and acidic residues" evidence="2">
    <location>
        <begin position="22"/>
        <end position="40"/>
    </location>
</feature>
<feature type="compositionally biased region" description="Basic residues" evidence="2">
    <location>
        <begin position="100"/>
        <end position="112"/>
    </location>
</feature>
<feature type="compositionally biased region" description="Polar residues" evidence="2">
    <location>
        <begin position="122"/>
        <end position="132"/>
    </location>
</feature>
<feature type="compositionally biased region" description="Basic and acidic residues" evidence="2">
    <location>
        <begin position="141"/>
        <end position="158"/>
    </location>
</feature>
<keyword id="KW-0175">Coiled coil</keyword>
<keyword id="KW-1185">Reference proteome</keyword>
<accession>Q8C6C7</accession>
<dbReference type="EMBL" id="AK075914">
    <property type="protein sequence ID" value="BAC36050.1"/>
    <property type="molecule type" value="mRNA"/>
</dbReference>
<dbReference type="CCDS" id="CCDS29939.1"/>
<dbReference type="RefSeq" id="NP_001345202.1">
    <property type="nucleotide sequence ID" value="NM_001358273.1"/>
</dbReference>
<dbReference type="RefSeq" id="NP_083924.2">
    <property type="nucleotide sequence ID" value="NM_029648.6"/>
</dbReference>
<dbReference type="RefSeq" id="XP_006527506.1">
    <property type="nucleotide sequence ID" value="XM_006527443.5"/>
</dbReference>
<dbReference type="RefSeq" id="XP_006527507.1">
    <property type="nucleotide sequence ID" value="XM_006527444.4"/>
</dbReference>
<dbReference type="RefSeq" id="XP_006527508.1">
    <property type="nucleotide sequence ID" value="XM_006527445.4"/>
</dbReference>
<dbReference type="RefSeq" id="XP_006527509.1">
    <property type="nucleotide sequence ID" value="XM_006527446.3"/>
</dbReference>
<dbReference type="RefSeq" id="XP_006527510.1">
    <property type="nucleotide sequence ID" value="XM_006527447.4"/>
</dbReference>
<dbReference type="SMR" id="Q8C6C7"/>
<dbReference type="FunCoup" id="Q8C6C7">
    <property type="interactions" value="355"/>
</dbReference>
<dbReference type="STRING" id="10090.ENSMUSP00000063913"/>
<dbReference type="PhosphoSitePlus" id="Q8C6C7"/>
<dbReference type="PaxDb" id="10090-ENSMUSP00000063913"/>
<dbReference type="ProteomicsDB" id="267690"/>
<dbReference type="Antibodypedia" id="49195">
    <property type="antibodies" value="27 antibodies from 11 providers"/>
</dbReference>
<dbReference type="DNASU" id="76539"/>
<dbReference type="Ensembl" id="ENSMUST00000065286.2">
    <property type="protein sequence ID" value="ENSMUSP00000063913.2"/>
    <property type="gene ID" value="ENSMUSG00000057858.9"/>
</dbReference>
<dbReference type="Ensembl" id="ENSMUST00000238054.2">
    <property type="protein sequence ID" value="ENSMUSP00000158259.2"/>
    <property type="gene ID" value="ENSMUSG00000057858.9"/>
</dbReference>
<dbReference type="GeneID" id="76539"/>
<dbReference type="KEGG" id="mmu:76539"/>
<dbReference type="UCSC" id="uc008ibr.1">
    <property type="organism name" value="mouse"/>
</dbReference>
<dbReference type="AGR" id="MGI:1289174"/>
<dbReference type="CTD" id="63877"/>
<dbReference type="MGI" id="MGI:1289174">
    <property type="gene designation" value="Fam204a"/>
</dbReference>
<dbReference type="VEuPathDB" id="HostDB:ENSMUSG00000057858"/>
<dbReference type="eggNOG" id="ENOG502RXHD">
    <property type="taxonomic scope" value="Eukaryota"/>
</dbReference>
<dbReference type="GeneTree" id="ENSGT00390000008978"/>
<dbReference type="HOGENOM" id="CLU_102986_0_0_1"/>
<dbReference type="InParanoid" id="Q8C6C7"/>
<dbReference type="OMA" id="REKHWKE"/>
<dbReference type="OrthoDB" id="2418792at2759"/>
<dbReference type="PhylomeDB" id="Q8C6C7"/>
<dbReference type="TreeFam" id="TF328607"/>
<dbReference type="BioGRID-ORCS" id="76539">
    <property type="hits" value="9 hits in 76 CRISPR screens"/>
</dbReference>
<dbReference type="ChiTaRS" id="Fam204a">
    <property type="organism name" value="mouse"/>
</dbReference>
<dbReference type="PRO" id="PR:Q8C6C7"/>
<dbReference type="Proteomes" id="UP000000589">
    <property type="component" value="Chromosome 19"/>
</dbReference>
<dbReference type="RNAct" id="Q8C6C7">
    <property type="molecule type" value="protein"/>
</dbReference>
<dbReference type="Bgee" id="ENSMUSG00000057858">
    <property type="expression patterns" value="Expressed in animal zygote and 218 other cell types or tissues"/>
</dbReference>
<dbReference type="ExpressionAtlas" id="Q8C6C7">
    <property type="expression patterns" value="baseline and differential"/>
</dbReference>
<dbReference type="InterPro" id="IPR037690">
    <property type="entry name" value="FAM204A"/>
</dbReference>
<dbReference type="PANTHER" id="PTHR14386">
    <property type="entry name" value="PROTEIN FAM204A"/>
    <property type="match status" value="1"/>
</dbReference>
<dbReference type="PANTHER" id="PTHR14386:SF2">
    <property type="entry name" value="PROTEIN FAM204A"/>
    <property type="match status" value="1"/>
</dbReference>
<protein>
    <recommendedName>
        <fullName>Protein FAM204A</fullName>
    </recommendedName>
</protein>
<reference key="1">
    <citation type="journal article" date="2005" name="Science">
        <title>The transcriptional landscape of the mammalian genome.</title>
        <authorList>
            <person name="Carninci P."/>
            <person name="Kasukawa T."/>
            <person name="Katayama S."/>
            <person name="Gough J."/>
            <person name="Frith M.C."/>
            <person name="Maeda N."/>
            <person name="Oyama R."/>
            <person name="Ravasi T."/>
            <person name="Lenhard B."/>
            <person name="Wells C."/>
            <person name="Kodzius R."/>
            <person name="Shimokawa K."/>
            <person name="Bajic V.B."/>
            <person name="Brenner S.E."/>
            <person name="Batalov S."/>
            <person name="Forrest A.R."/>
            <person name="Zavolan M."/>
            <person name="Davis M.J."/>
            <person name="Wilming L.G."/>
            <person name="Aidinis V."/>
            <person name="Allen J.E."/>
            <person name="Ambesi-Impiombato A."/>
            <person name="Apweiler R."/>
            <person name="Aturaliya R.N."/>
            <person name="Bailey T.L."/>
            <person name="Bansal M."/>
            <person name="Baxter L."/>
            <person name="Beisel K.W."/>
            <person name="Bersano T."/>
            <person name="Bono H."/>
            <person name="Chalk A.M."/>
            <person name="Chiu K.P."/>
            <person name="Choudhary V."/>
            <person name="Christoffels A."/>
            <person name="Clutterbuck D.R."/>
            <person name="Crowe M.L."/>
            <person name="Dalla E."/>
            <person name="Dalrymple B.P."/>
            <person name="de Bono B."/>
            <person name="Della Gatta G."/>
            <person name="di Bernardo D."/>
            <person name="Down T."/>
            <person name="Engstrom P."/>
            <person name="Fagiolini M."/>
            <person name="Faulkner G."/>
            <person name="Fletcher C.F."/>
            <person name="Fukushima T."/>
            <person name="Furuno M."/>
            <person name="Futaki S."/>
            <person name="Gariboldi M."/>
            <person name="Georgii-Hemming P."/>
            <person name="Gingeras T.R."/>
            <person name="Gojobori T."/>
            <person name="Green R.E."/>
            <person name="Gustincich S."/>
            <person name="Harbers M."/>
            <person name="Hayashi Y."/>
            <person name="Hensch T.K."/>
            <person name="Hirokawa N."/>
            <person name="Hill D."/>
            <person name="Huminiecki L."/>
            <person name="Iacono M."/>
            <person name="Ikeo K."/>
            <person name="Iwama A."/>
            <person name="Ishikawa T."/>
            <person name="Jakt M."/>
            <person name="Kanapin A."/>
            <person name="Katoh M."/>
            <person name="Kawasawa Y."/>
            <person name="Kelso J."/>
            <person name="Kitamura H."/>
            <person name="Kitano H."/>
            <person name="Kollias G."/>
            <person name="Krishnan S.P."/>
            <person name="Kruger A."/>
            <person name="Kummerfeld S.K."/>
            <person name="Kurochkin I.V."/>
            <person name="Lareau L.F."/>
            <person name="Lazarevic D."/>
            <person name="Lipovich L."/>
            <person name="Liu J."/>
            <person name="Liuni S."/>
            <person name="McWilliam S."/>
            <person name="Madan Babu M."/>
            <person name="Madera M."/>
            <person name="Marchionni L."/>
            <person name="Matsuda H."/>
            <person name="Matsuzawa S."/>
            <person name="Miki H."/>
            <person name="Mignone F."/>
            <person name="Miyake S."/>
            <person name="Morris K."/>
            <person name="Mottagui-Tabar S."/>
            <person name="Mulder N."/>
            <person name="Nakano N."/>
            <person name="Nakauchi H."/>
            <person name="Ng P."/>
            <person name="Nilsson R."/>
            <person name="Nishiguchi S."/>
            <person name="Nishikawa S."/>
            <person name="Nori F."/>
            <person name="Ohara O."/>
            <person name="Okazaki Y."/>
            <person name="Orlando V."/>
            <person name="Pang K.C."/>
            <person name="Pavan W.J."/>
            <person name="Pavesi G."/>
            <person name="Pesole G."/>
            <person name="Petrovsky N."/>
            <person name="Piazza S."/>
            <person name="Reed J."/>
            <person name="Reid J.F."/>
            <person name="Ring B.Z."/>
            <person name="Ringwald M."/>
            <person name="Rost B."/>
            <person name="Ruan Y."/>
            <person name="Salzberg S.L."/>
            <person name="Sandelin A."/>
            <person name="Schneider C."/>
            <person name="Schoenbach C."/>
            <person name="Sekiguchi K."/>
            <person name="Semple C.A."/>
            <person name="Seno S."/>
            <person name="Sessa L."/>
            <person name="Sheng Y."/>
            <person name="Shibata Y."/>
            <person name="Shimada H."/>
            <person name="Shimada K."/>
            <person name="Silva D."/>
            <person name="Sinclair B."/>
            <person name="Sperling S."/>
            <person name="Stupka E."/>
            <person name="Sugiura K."/>
            <person name="Sultana R."/>
            <person name="Takenaka Y."/>
            <person name="Taki K."/>
            <person name="Tammoja K."/>
            <person name="Tan S.L."/>
            <person name="Tang S."/>
            <person name="Taylor M.S."/>
            <person name="Tegner J."/>
            <person name="Teichmann S.A."/>
            <person name="Ueda H.R."/>
            <person name="van Nimwegen E."/>
            <person name="Verardo R."/>
            <person name="Wei C.L."/>
            <person name="Yagi K."/>
            <person name="Yamanishi H."/>
            <person name="Zabarovsky E."/>
            <person name="Zhu S."/>
            <person name="Zimmer A."/>
            <person name="Hide W."/>
            <person name="Bult C."/>
            <person name="Grimmond S.M."/>
            <person name="Teasdale R.D."/>
            <person name="Liu E.T."/>
            <person name="Brusic V."/>
            <person name="Quackenbush J."/>
            <person name="Wahlestedt C."/>
            <person name="Mattick J.S."/>
            <person name="Hume D.A."/>
            <person name="Kai C."/>
            <person name="Sasaki D."/>
            <person name="Tomaru Y."/>
            <person name="Fukuda S."/>
            <person name="Kanamori-Katayama M."/>
            <person name="Suzuki M."/>
            <person name="Aoki J."/>
            <person name="Arakawa T."/>
            <person name="Iida J."/>
            <person name="Imamura K."/>
            <person name="Itoh M."/>
            <person name="Kato T."/>
            <person name="Kawaji H."/>
            <person name="Kawagashira N."/>
            <person name="Kawashima T."/>
            <person name="Kojima M."/>
            <person name="Kondo S."/>
            <person name="Konno H."/>
            <person name="Nakano K."/>
            <person name="Ninomiya N."/>
            <person name="Nishio T."/>
            <person name="Okada M."/>
            <person name="Plessy C."/>
            <person name="Shibata K."/>
            <person name="Shiraki T."/>
            <person name="Suzuki S."/>
            <person name="Tagami M."/>
            <person name="Waki K."/>
            <person name="Watahiki A."/>
            <person name="Okamura-Oho Y."/>
            <person name="Suzuki H."/>
            <person name="Kawai J."/>
            <person name="Hayashizaki Y."/>
        </authorList>
    </citation>
    <scope>NUCLEOTIDE SEQUENCE [LARGE SCALE MRNA]</scope>
    <source>
        <strain>C57BL/6J</strain>
        <tissue>Tongue</tissue>
    </source>
</reference>
<organism>
    <name type="scientific">Mus musculus</name>
    <name type="common">Mouse</name>
    <dbReference type="NCBI Taxonomy" id="10090"/>
    <lineage>
        <taxon>Eukaryota</taxon>
        <taxon>Metazoa</taxon>
        <taxon>Chordata</taxon>
        <taxon>Craniata</taxon>
        <taxon>Vertebrata</taxon>
        <taxon>Euteleostomi</taxon>
        <taxon>Mammalia</taxon>
        <taxon>Eutheria</taxon>
        <taxon>Euarchontoglires</taxon>
        <taxon>Glires</taxon>
        <taxon>Rodentia</taxon>
        <taxon>Myomorpha</taxon>
        <taxon>Muroidea</taxon>
        <taxon>Muridae</taxon>
        <taxon>Murinae</taxon>
        <taxon>Mus</taxon>
        <taxon>Mus</taxon>
    </lineage>
</organism>
<sequence>MWSGLLPPGLNESDVESDSEDEIKLENPEPSEHNLQEDGKTGSSTKPAVSDFPTGQPETETEADADAYEKCPSGIPLNIWNKFQELHKKNSEQKNSTPRFRQKKRKRSKKGKLKNEKESHSEQSSNETQWEELTQYFGANDRFEPPVKQKKVEKSGLEKRIDQAVEEWDVEKAEELSNQLATRELGVKIAKAIACHKFVKAKKEAENSQAARKKKKLAWGFEAKKRWETKSNMGYM</sequence>
<proteinExistence type="evidence at transcript level"/>
<gene>
    <name type="primary">Fam204a</name>
    <name type="synonym">D19Ertd737e</name>
</gene>
<name>F204A_MOUSE</name>
<evidence type="ECO:0000255" key="1"/>
<evidence type="ECO:0000256" key="2">
    <source>
        <dbReference type="SAM" id="MobiDB-lite"/>
    </source>
</evidence>